<name>RL37A_BOVIN</name>
<comment type="function">
    <text evidence="2">Component of the large ribosomal subunit. The ribosome is a large ribonucleoprotein complex responsible for the synthesis of proteins in the cell.</text>
</comment>
<comment type="subunit">
    <text evidence="2">Component of the large ribosomal subunit.</text>
</comment>
<comment type="subcellular location">
    <subcellularLocation>
        <location evidence="2">Cytoplasm</location>
    </subcellularLocation>
</comment>
<comment type="similarity">
    <text evidence="3">Belongs to the eukaryotic ribosomal protein eL43 family.</text>
</comment>
<protein>
    <recommendedName>
        <fullName evidence="3">Large ribosomal subunit protein eL43</fullName>
    </recommendedName>
    <alternativeName>
        <fullName>60S ribosomal protein L37a</fullName>
    </alternativeName>
</protein>
<gene>
    <name type="primary">RPL37A</name>
</gene>
<evidence type="ECO:0000250" key="1">
    <source>
        <dbReference type="UniProtKB" id="P49166"/>
    </source>
</evidence>
<evidence type="ECO:0000250" key="2">
    <source>
        <dbReference type="UniProtKB" id="P61513"/>
    </source>
</evidence>
<evidence type="ECO:0000305" key="3"/>
<feature type="chain" id="PRO_0000240152" description="Large ribosomal subunit protein eL43">
    <location>
        <begin position="1"/>
        <end position="92"/>
    </location>
</feature>
<feature type="zinc finger region" description="C4-type">
    <location>
        <begin position="39"/>
        <end position="60"/>
    </location>
</feature>
<feature type="binding site" evidence="1">
    <location>
        <position position="39"/>
    </location>
    <ligand>
        <name>Zn(2+)</name>
        <dbReference type="ChEBI" id="CHEBI:29105"/>
    </ligand>
</feature>
<feature type="binding site" evidence="1">
    <location>
        <position position="42"/>
    </location>
    <ligand>
        <name>Zn(2+)</name>
        <dbReference type="ChEBI" id="CHEBI:29105"/>
    </ligand>
</feature>
<feature type="binding site" evidence="1">
    <location>
        <position position="57"/>
    </location>
    <ligand>
        <name>Zn(2+)</name>
        <dbReference type="ChEBI" id="CHEBI:29105"/>
    </ligand>
</feature>
<feature type="binding site" evidence="1">
    <location>
        <position position="60"/>
    </location>
    <ligand>
        <name>Zn(2+)</name>
        <dbReference type="ChEBI" id="CHEBI:29105"/>
    </ligand>
</feature>
<dbReference type="EMBL" id="BC102044">
    <property type="protein sequence ID" value="AAI02045.1"/>
    <property type="molecule type" value="mRNA"/>
</dbReference>
<dbReference type="RefSeq" id="NP_001030180.1">
    <property type="nucleotide sequence ID" value="NM_001035008.2"/>
</dbReference>
<dbReference type="SMR" id="Q3MIC0"/>
<dbReference type="FunCoup" id="Q3MIC0">
    <property type="interactions" value="1595"/>
</dbReference>
<dbReference type="STRING" id="9913.ENSBTAP00000060484"/>
<dbReference type="PaxDb" id="9913-ENSBTAP00000005015"/>
<dbReference type="GeneID" id="504413"/>
<dbReference type="KEGG" id="bta:504413"/>
<dbReference type="CTD" id="6168"/>
<dbReference type="VEuPathDB" id="HostDB:ENSBTAG00000051254"/>
<dbReference type="eggNOG" id="KOG0402">
    <property type="taxonomic scope" value="Eukaryota"/>
</dbReference>
<dbReference type="HOGENOM" id="CLU_141199_1_0_1"/>
<dbReference type="InParanoid" id="Q3MIC0"/>
<dbReference type="OMA" id="GPRYGRK"/>
<dbReference type="OrthoDB" id="9691825at2759"/>
<dbReference type="TreeFam" id="TF313068"/>
<dbReference type="Reactome" id="R-BTA-156827">
    <property type="pathway name" value="L13a-mediated translational silencing of Ceruloplasmin expression"/>
</dbReference>
<dbReference type="Reactome" id="R-BTA-1799339">
    <property type="pathway name" value="SRP-dependent cotranslational protein targeting to membrane"/>
</dbReference>
<dbReference type="Reactome" id="R-BTA-6791226">
    <property type="pathway name" value="Major pathway of rRNA processing in the nucleolus and cytosol"/>
</dbReference>
<dbReference type="Reactome" id="R-BTA-72689">
    <property type="pathway name" value="Formation of a pool of free 40S subunits"/>
</dbReference>
<dbReference type="Reactome" id="R-BTA-72706">
    <property type="pathway name" value="GTP hydrolysis and joining of the 60S ribosomal subunit"/>
</dbReference>
<dbReference type="Reactome" id="R-BTA-975956">
    <property type="pathway name" value="Nonsense Mediated Decay (NMD) independent of the Exon Junction Complex (EJC)"/>
</dbReference>
<dbReference type="Reactome" id="R-BTA-975957">
    <property type="pathway name" value="Nonsense Mediated Decay (NMD) enhanced by the Exon Junction Complex (EJC)"/>
</dbReference>
<dbReference type="Proteomes" id="UP000009136">
    <property type="component" value="Chromosome 2"/>
</dbReference>
<dbReference type="Bgee" id="ENSBTAG00000051254">
    <property type="expression patterns" value="Expressed in adenohypophysis and 103 other cell types or tissues"/>
</dbReference>
<dbReference type="GO" id="GO:0022625">
    <property type="term" value="C:cytosolic large ribosomal subunit"/>
    <property type="evidence" value="ECO:0000318"/>
    <property type="project" value="GO_Central"/>
</dbReference>
<dbReference type="GO" id="GO:0003735">
    <property type="term" value="F:structural constituent of ribosome"/>
    <property type="evidence" value="ECO:0007669"/>
    <property type="project" value="InterPro"/>
</dbReference>
<dbReference type="GO" id="GO:0008270">
    <property type="term" value="F:zinc ion binding"/>
    <property type="evidence" value="ECO:0007669"/>
    <property type="project" value="UniProtKB-KW"/>
</dbReference>
<dbReference type="GO" id="GO:0006412">
    <property type="term" value="P:translation"/>
    <property type="evidence" value="ECO:0007669"/>
    <property type="project" value="InterPro"/>
</dbReference>
<dbReference type="FunFam" id="2.20.25.30:FF:000002">
    <property type="entry name" value="60S ribosomal protein L37a"/>
    <property type="match status" value="1"/>
</dbReference>
<dbReference type="Gene3D" id="2.20.25.30">
    <property type="match status" value="1"/>
</dbReference>
<dbReference type="HAMAP" id="MF_00327">
    <property type="entry name" value="Ribosomal_eL43"/>
    <property type="match status" value="1"/>
</dbReference>
<dbReference type="InterPro" id="IPR011331">
    <property type="entry name" value="Ribosomal_eL37/eL43"/>
</dbReference>
<dbReference type="InterPro" id="IPR002674">
    <property type="entry name" value="Ribosomal_eL43"/>
</dbReference>
<dbReference type="InterPro" id="IPR011332">
    <property type="entry name" value="Ribosomal_zn-bd"/>
</dbReference>
<dbReference type="NCBIfam" id="TIGR00280">
    <property type="entry name" value="eL43_euk_arch"/>
    <property type="match status" value="1"/>
</dbReference>
<dbReference type="NCBIfam" id="NF003058">
    <property type="entry name" value="PRK03976.1"/>
    <property type="match status" value="1"/>
</dbReference>
<dbReference type="PANTHER" id="PTHR48188:SF2">
    <property type="entry name" value="60S RIBOSOMAL PROTEIN L37A"/>
    <property type="match status" value="1"/>
</dbReference>
<dbReference type="PANTHER" id="PTHR48188">
    <property type="entry name" value="60S RIBOSOMAL PROTEIN L43"/>
    <property type="match status" value="1"/>
</dbReference>
<dbReference type="Pfam" id="PF01780">
    <property type="entry name" value="Ribosomal_L37ae"/>
    <property type="match status" value="1"/>
</dbReference>
<dbReference type="SUPFAM" id="SSF57829">
    <property type="entry name" value="Zn-binding ribosomal proteins"/>
    <property type="match status" value="1"/>
</dbReference>
<sequence length="92" mass="10275">MAKRTKKVGIVGKYGTRYGASLRKMVKKIEISQHAKYTCSFCGKTKMKRRAVGIWHCGSCMKTVAGGAWTYNTTSAVTVKSAIRRLKELKDQ</sequence>
<accession>Q3MIC0</accession>
<proteinExistence type="inferred from homology"/>
<organism>
    <name type="scientific">Bos taurus</name>
    <name type="common">Bovine</name>
    <dbReference type="NCBI Taxonomy" id="9913"/>
    <lineage>
        <taxon>Eukaryota</taxon>
        <taxon>Metazoa</taxon>
        <taxon>Chordata</taxon>
        <taxon>Craniata</taxon>
        <taxon>Vertebrata</taxon>
        <taxon>Euteleostomi</taxon>
        <taxon>Mammalia</taxon>
        <taxon>Eutheria</taxon>
        <taxon>Laurasiatheria</taxon>
        <taxon>Artiodactyla</taxon>
        <taxon>Ruminantia</taxon>
        <taxon>Pecora</taxon>
        <taxon>Bovidae</taxon>
        <taxon>Bovinae</taxon>
        <taxon>Bos</taxon>
    </lineage>
</organism>
<keyword id="KW-0963">Cytoplasm</keyword>
<keyword id="KW-0479">Metal-binding</keyword>
<keyword id="KW-1185">Reference proteome</keyword>
<keyword id="KW-0687">Ribonucleoprotein</keyword>
<keyword id="KW-0689">Ribosomal protein</keyword>
<keyword id="KW-0862">Zinc</keyword>
<keyword id="KW-0863">Zinc-finger</keyword>
<reference key="1">
    <citation type="submission" date="2005-08" db="EMBL/GenBank/DDBJ databases">
        <authorList>
            <consortium name="NIH - Mammalian Gene Collection (MGC) project"/>
        </authorList>
    </citation>
    <scope>NUCLEOTIDE SEQUENCE [LARGE SCALE MRNA]</scope>
    <source>
        <strain>Hereford</strain>
        <tissue>Thymus</tissue>
    </source>
</reference>